<feature type="chain" id="PRO_0000391242" description="NADH-quinone oxidoreductase subunit N">
    <location>
        <begin position="1"/>
        <end position="480"/>
    </location>
</feature>
<feature type="transmembrane region" description="Helical" evidence="1">
    <location>
        <begin position="11"/>
        <end position="31"/>
    </location>
</feature>
<feature type="transmembrane region" description="Helical" evidence="1">
    <location>
        <begin position="38"/>
        <end position="58"/>
    </location>
</feature>
<feature type="transmembrane region" description="Helical" evidence="1">
    <location>
        <begin position="74"/>
        <end position="94"/>
    </location>
</feature>
<feature type="transmembrane region" description="Helical" evidence="1">
    <location>
        <begin position="109"/>
        <end position="129"/>
    </location>
</feature>
<feature type="transmembrane region" description="Helical" evidence="1">
    <location>
        <begin position="163"/>
        <end position="183"/>
    </location>
</feature>
<feature type="transmembrane region" description="Helical" evidence="1">
    <location>
        <begin position="200"/>
        <end position="220"/>
    </location>
</feature>
<feature type="transmembrane region" description="Helical" evidence="1">
    <location>
        <begin position="239"/>
        <end position="259"/>
    </location>
</feature>
<feature type="transmembrane region" description="Helical" evidence="1">
    <location>
        <begin position="273"/>
        <end position="293"/>
    </location>
</feature>
<feature type="transmembrane region" description="Helical" evidence="1">
    <location>
        <begin position="301"/>
        <end position="321"/>
    </location>
</feature>
<feature type="transmembrane region" description="Helical" evidence="1">
    <location>
        <begin position="329"/>
        <end position="349"/>
    </location>
</feature>
<feature type="transmembrane region" description="Helical" evidence="1">
    <location>
        <begin position="372"/>
        <end position="392"/>
    </location>
</feature>
<feature type="transmembrane region" description="Helical" evidence="1">
    <location>
        <begin position="405"/>
        <end position="425"/>
    </location>
</feature>
<feature type="transmembrane region" description="Helical" evidence="1">
    <location>
        <begin position="451"/>
        <end position="471"/>
    </location>
</feature>
<protein>
    <recommendedName>
        <fullName evidence="1">NADH-quinone oxidoreductase subunit N</fullName>
        <ecNumber evidence="1">7.1.1.-</ecNumber>
    </recommendedName>
    <alternativeName>
        <fullName evidence="1">NADH dehydrogenase I subunit N</fullName>
    </alternativeName>
    <alternativeName>
        <fullName evidence="1">NDH-1 subunit N</fullName>
    </alternativeName>
</protein>
<sequence length="480" mass="52308">MTFEIPDFMPVIPELFVLGMACAILVIDLFVPQSRRDITYGLSQFTLIGAAILTIALASPETRFTFNDTFIADGLSDLLKVAVYLITAVVFLYSRPYLQDRDIYKGEYYVLGLFGVLGMMIMISSYSFLTLYLGLELLSLSLYAMVAFNRDSARASEAAMKYFILGAIASGMLLYGMSILYGITGSLDIKEVSDYLITSGAGLNVPLVFALSFVIVGLAFKLGAVPFHMWVPDVYHGAPTSVTLFIGTAPKLAGLAIIMRLLVDGLGPLHHDWQGMLTILAVLSLAVGNVVAIAQTNIKRMLAYSTISHVGFILMGILAGTHEGYAAALFYTLVYAIVAAGGFGMIILLSRRGFEAENLDDFRGLNERSPWFAFIMLLIMFSMAGVPPTVGFYAKLAVLQAVVQVEMIWLAIFAVIFSIVGAFYYLRAVKIMYFDKPEDESPLPKALDMNVVLSINGLLVIVLGIFPGLLMSLATGAISW</sequence>
<keyword id="KW-0997">Cell inner membrane</keyword>
<keyword id="KW-1003">Cell membrane</keyword>
<keyword id="KW-0472">Membrane</keyword>
<keyword id="KW-0520">NAD</keyword>
<keyword id="KW-0874">Quinone</keyword>
<keyword id="KW-1185">Reference proteome</keyword>
<keyword id="KW-1278">Translocase</keyword>
<keyword id="KW-0812">Transmembrane</keyword>
<keyword id="KW-1133">Transmembrane helix</keyword>
<keyword id="KW-0813">Transport</keyword>
<keyword id="KW-0830">Ubiquinone</keyword>
<accession>B8GNZ8</accession>
<evidence type="ECO:0000255" key="1">
    <source>
        <dbReference type="HAMAP-Rule" id="MF_00445"/>
    </source>
</evidence>
<organism>
    <name type="scientific">Thioalkalivibrio sulfidiphilus (strain HL-EbGR7)</name>
    <dbReference type="NCBI Taxonomy" id="396588"/>
    <lineage>
        <taxon>Bacteria</taxon>
        <taxon>Pseudomonadati</taxon>
        <taxon>Pseudomonadota</taxon>
        <taxon>Gammaproteobacteria</taxon>
        <taxon>Chromatiales</taxon>
        <taxon>Ectothiorhodospiraceae</taxon>
        <taxon>Thioalkalivibrio</taxon>
    </lineage>
</organism>
<proteinExistence type="inferred from homology"/>
<gene>
    <name evidence="1" type="primary">nuoN</name>
    <name type="ordered locus">Tgr7_0999</name>
</gene>
<name>NUON_THISH</name>
<dbReference type="EC" id="7.1.1.-" evidence="1"/>
<dbReference type="EMBL" id="CP001339">
    <property type="protein sequence ID" value="ACL72087.1"/>
    <property type="molecule type" value="Genomic_DNA"/>
</dbReference>
<dbReference type="RefSeq" id="WP_012637571.1">
    <property type="nucleotide sequence ID" value="NC_011901.1"/>
</dbReference>
<dbReference type="SMR" id="B8GNZ8"/>
<dbReference type="STRING" id="396588.Tgr7_0999"/>
<dbReference type="KEGG" id="tgr:Tgr7_0999"/>
<dbReference type="eggNOG" id="COG1007">
    <property type="taxonomic scope" value="Bacteria"/>
</dbReference>
<dbReference type="HOGENOM" id="CLU_007100_1_3_6"/>
<dbReference type="OrthoDB" id="9768329at2"/>
<dbReference type="Proteomes" id="UP000002383">
    <property type="component" value="Chromosome"/>
</dbReference>
<dbReference type="GO" id="GO:0005886">
    <property type="term" value="C:plasma membrane"/>
    <property type="evidence" value="ECO:0007669"/>
    <property type="project" value="UniProtKB-SubCell"/>
</dbReference>
<dbReference type="GO" id="GO:0008137">
    <property type="term" value="F:NADH dehydrogenase (ubiquinone) activity"/>
    <property type="evidence" value="ECO:0007669"/>
    <property type="project" value="InterPro"/>
</dbReference>
<dbReference type="GO" id="GO:0050136">
    <property type="term" value="F:NADH:ubiquinone reductase (non-electrogenic) activity"/>
    <property type="evidence" value="ECO:0007669"/>
    <property type="project" value="UniProtKB-UniRule"/>
</dbReference>
<dbReference type="GO" id="GO:0048038">
    <property type="term" value="F:quinone binding"/>
    <property type="evidence" value="ECO:0007669"/>
    <property type="project" value="UniProtKB-KW"/>
</dbReference>
<dbReference type="GO" id="GO:0042773">
    <property type="term" value="P:ATP synthesis coupled electron transport"/>
    <property type="evidence" value="ECO:0007669"/>
    <property type="project" value="InterPro"/>
</dbReference>
<dbReference type="HAMAP" id="MF_00445">
    <property type="entry name" value="NDH1_NuoN_1"/>
    <property type="match status" value="1"/>
</dbReference>
<dbReference type="InterPro" id="IPR010096">
    <property type="entry name" value="NADH-Q_OxRdtase_suN/2"/>
</dbReference>
<dbReference type="InterPro" id="IPR001750">
    <property type="entry name" value="ND/Mrp_TM"/>
</dbReference>
<dbReference type="NCBIfam" id="TIGR01770">
    <property type="entry name" value="NDH_I_N"/>
    <property type="match status" value="1"/>
</dbReference>
<dbReference type="NCBIfam" id="NF004442">
    <property type="entry name" value="PRK05777.1-5"/>
    <property type="match status" value="1"/>
</dbReference>
<dbReference type="PANTHER" id="PTHR22773">
    <property type="entry name" value="NADH DEHYDROGENASE"/>
    <property type="match status" value="1"/>
</dbReference>
<dbReference type="Pfam" id="PF00361">
    <property type="entry name" value="Proton_antipo_M"/>
    <property type="match status" value="1"/>
</dbReference>
<dbReference type="PRINTS" id="PR01434">
    <property type="entry name" value="NADHDHGNASE5"/>
</dbReference>
<reference key="1">
    <citation type="journal article" date="2011" name="Stand. Genomic Sci.">
        <title>Complete genome sequence of 'Thioalkalivibrio sulfidophilus' HL-EbGr7.</title>
        <authorList>
            <person name="Muyzer G."/>
            <person name="Sorokin D.Y."/>
            <person name="Mavromatis K."/>
            <person name="Lapidus A."/>
            <person name="Clum A."/>
            <person name="Ivanova N."/>
            <person name="Pati A."/>
            <person name="d'Haeseleer P."/>
            <person name="Woyke T."/>
            <person name="Kyrpides N.C."/>
        </authorList>
    </citation>
    <scope>NUCLEOTIDE SEQUENCE [LARGE SCALE GENOMIC DNA]</scope>
    <source>
        <strain>HL-EbGR7</strain>
    </source>
</reference>
<comment type="function">
    <text evidence="1">NDH-1 shuttles electrons from NADH, via FMN and iron-sulfur (Fe-S) centers, to quinones in the respiratory chain. The immediate electron acceptor for the enzyme in this species is believed to be ubiquinone. Couples the redox reaction to proton translocation (for every two electrons transferred, four hydrogen ions are translocated across the cytoplasmic membrane), and thus conserves the redox energy in a proton gradient.</text>
</comment>
<comment type="catalytic activity">
    <reaction evidence="1">
        <text>a quinone + NADH + 5 H(+)(in) = a quinol + NAD(+) + 4 H(+)(out)</text>
        <dbReference type="Rhea" id="RHEA:57888"/>
        <dbReference type="ChEBI" id="CHEBI:15378"/>
        <dbReference type="ChEBI" id="CHEBI:24646"/>
        <dbReference type="ChEBI" id="CHEBI:57540"/>
        <dbReference type="ChEBI" id="CHEBI:57945"/>
        <dbReference type="ChEBI" id="CHEBI:132124"/>
    </reaction>
</comment>
<comment type="subunit">
    <text evidence="1">NDH-1 is composed of 14 different subunits. Subunits NuoA, H, J, K, L, M, N constitute the membrane sector of the complex.</text>
</comment>
<comment type="subcellular location">
    <subcellularLocation>
        <location evidence="1">Cell inner membrane</location>
        <topology evidence="1">Multi-pass membrane protein</topology>
    </subcellularLocation>
</comment>
<comment type="similarity">
    <text evidence="1">Belongs to the complex I subunit 2 family.</text>
</comment>